<geneLocation type="chloroplast"/>
<protein>
    <recommendedName>
        <fullName evidence="1">Photosystem I reaction center subunit IX</fullName>
    </recommendedName>
    <alternativeName>
        <fullName evidence="1">PSI-J</fullName>
    </alternativeName>
</protein>
<proteinExistence type="inferred from homology"/>
<accession>A4QKV1</accession>
<reference key="1">
    <citation type="submission" date="2007-03" db="EMBL/GenBank/DDBJ databases">
        <title>Sequencing analysis of Crucihimalaya wallichii chloroplast DNA.</title>
        <authorList>
            <person name="Hosouchi T."/>
            <person name="Tsuruoka H."/>
            <person name="Kotani H."/>
        </authorList>
    </citation>
    <scope>NUCLEOTIDE SEQUENCE [LARGE SCALE GENOMIC DNA]</scope>
</reference>
<keyword id="KW-0150">Chloroplast</keyword>
<keyword id="KW-0472">Membrane</keyword>
<keyword id="KW-0602">Photosynthesis</keyword>
<keyword id="KW-0603">Photosystem I</keyword>
<keyword id="KW-0934">Plastid</keyword>
<keyword id="KW-0793">Thylakoid</keyword>
<keyword id="KW-0812">Transmembrane</keyword>
<keyword id="KW-1133">Transmembrane helix</keyword>
<feature type="chain" id="PRO_0000354138" description="Photosystem I reaction center subunit IX">
    <location>
        <begin position="1"/>
        <end position="44"/>
    </location>
</feature>
<feature type="transmembrane region" description="Helical" evidence="1">
    <location>
        <begin position="7"/>
        <end position="27"/>
    </location>
</feature>
<sequence length="44" mass="5009">MRDLKTYLSVAPVLSTLWFGSLAGLLIEINRLFPDALTFPFFSF</sequence>
<name>PSAJ_CRUWA</name>
<dbReference type="EMBL" id="AP009372">
    <property type="protein sequence ID" value="BAF50306.1"/>
    <property type="molecule type" value="Genomic_DNA"/>
</dbReference>
<dbReference type="RefSeq" id="YP_001123482.1">
    <property type="nucleotide sequence ID" value="NC_009271.1"/>
</dbReference>
<dbReference type="SMR" id="A4QKV1"/>
<dbReference type="GeneID" id="4962710"/>
<dbReference type="GO" id="GO:0009535">
    <property type="term" value="C:chloroplast thylakoid membrane"/>
    <property type="evidence" value="ECO:0007669"/>
    <property type="project" value="UniProtKB-SubCell"/>
</dbReference>
<dbReference type="GO" id="GO:0009522">
    <property type="term" value="C:photosystem I"/>
    <property type="evidence" value="ECO:0007669"/>
    <property type="project" value="UniProtKB-KW"/>
</dbReference>
<dbReference type="GO" id="GO:0015979">
    <property type="term" value="P:photosynthesis"/>
    <property type="evidence" value="ECO:0007669"/>
    <property type="project" value="UniProtKB-UniRule"/>
</dbReference>
<dbReference type="FunFam" id="1.20.5.510:FF:000001">
    <property type="entry name" value="Photosystem I reaction center subunit IX"/>
    <property type="match status" value="1"/>
</dbReference>
<dbReference type="Gene3D" id="1.20.5.510">
    <property type="entry name" value="Single helix bin"/>
    <property type="match status" value="1"/>
</dbReference>
<dbReference type="HAMAP" id="MF_00522">
    <property type="entry name" value="PSI_PsaJ"/>
    <property type="match status" value="1"/>
</dbReference>
<dbReference type="InterPro" id="IPR002615">
    <property type="entry name" value="PSI_PsaJ"/>
</dbReference>
<dbReference type="InterPro" id="IPR036062">
    <property type="entry name" value="PSI_PsaJ_sf"/>
</dbReference>
<dbReference type="PANTHER" id="PTHR36082">
    <property type="match status" value="1"/>
</dbReference>
<dbReference type="PANTHER" id="PTHR36082:SF2">
    <property type="entry name" value="PHOTOSYSTEM I REACTION CENTER SUBUNIT IX"/>
    <property type="match status" value="1"/>
</dbReference>
<dbReference type="Pfam" id="PF01701">
    <property type="entry name" value="PSI_PsaJ"/>
    <property type="match status" value="1"/>
</dbReference>
<dbReference type="SUPFAM" id="SSF81544">
    <property type="entry name" value="Subunit IX of photosystem I reaction centre, PsaJ"/>
    <property type="match status" value="1"/>
</dbReference>
<organism>
    <name type="scientific">Crucihimalaya wallichii</name>
    <name type="common">Rock-cress</name>
    <name type="synonym">Arabidopsis campestris</name>
    <dbReference type="NCBI Taxonomy" id="78192"/>
    <lineage>
        <taxon>Eukaryota</taxon>
        <taxon>Viridiplantae</taxon>
        <taxon>Streptophyta</taxon>
        <taxon>Embryophyta</taxon>
        <taxon>Tracheophyta</taxon>
        <taxon>Spermatophyta</taxon>
        <taxon>Magnoliopsida</taxon>
        <taxon>eudicotyledons</taxon>
        <taxon>Gunneridae</taxon>
        <taxon>Pentapetalae</taxon>
        <taxon>rosids</taxon>
        <taxon>malvids</taxon>
        <taxon>Brassicales</taxon>
        <taxon>Brassicaceae</taxon>
        <taxon>Crucihimalayeae</taxon>
        <taxon>Crucihimalaya</taxon>
    </lineage>
</organism>
<evidence type="ECO:0000255" key="1">
    <source>
        <dbReference type="HAMAP-Rule" id="MF_00522"/>
    </source>
</evidence>
<gene>
    <name evidence="1" type="primary">psaJ</name>
</gene>
<comment type="function">
    <text evidence="1">May help in the organization of the PsaE and PsaF subunits.</text>
</comment>
<comment type="subcellular location">
    <subcellularLocation>
        <location evidence="1">Plastid</location>
        <location evidence="1">Chloroplast thylakoid membrane</location>
        <topology evidence="1">Single-pass membrane protein</topology>
    </subcellularLocation>
</comment>
<comment type="similarity">
    <text evidence="1">Belongs to the PsaJ family.</text>
</comment>